<organismHost>
    <name type="scientific">Homo sapiens</name>
    <name type="common">Human</name>
    <dbReference type="NCBI Taxonomy" id="9606"/>
</organismHost>
<name>POL_HV1Y2</name>
<keyword id="KW-0002">3D-structure</keyword>
<keyword id="KW-1073">Activation of host caspases by virus</keyword>
<keyword id="KW-0014">AIDS</keyword>
<keyword id="KW-0064">Aspartyl protease</keyword>
<keyword id="KW-0167">Capsid protein</keyword>
<keyword id="KW-0229">DNA integration</keyword>
<keyword id="KW-0233">DNA recombination</keyword>
<keyword id="KW-0238">DNA-binding</keyword>
<keyword id="KW-0239">DNA-directed DNA polymerase</keyword>
<keyword id="KW-0255">Endonuclease</keyword>
<keyword id="KW-1262">Eukaryotic host gene expression shutoff by virus</keyword>
<keyword id="KW-1193">Eukaryotic host translation shutoff by virus</keyword>
<keyword id="KW-1032">Host cell membrane</keyword>
<keyword id="KW-1035">Host cytoplasm</keyword>
<keyword id="KW-1039">Host endosome</keyword>
<keyword id="KW-1190">Host gene expression shutoff by virus</keyword>
<keyword id="KW-1043">Host membrane</keyword>
<keyword id="KW-1048">Host nucleus</keyword>
<keyword id="KW-0945">Host-virus interaction</keyword>
<keyword id="KW-0378">Hydrolase</keyword>
<keyword id="KW-0446">Lipid-binding</keyword>
<keyword id="KW-0449">Lipoprotein</keyword>
<keyword id="KW-0460">Magnesium</keyword>
<keyword id="KW-0472">Membrane</keyword>
<keyword id="KW-0479">Metal-binding</keyword>
<keyword id="KW-1119">Modulation of host cell apoptosis by virus</keyword>
<keyword id="KW-0511">Multifunctional enzyme</keyword>
<keyword id="KW-0519">Myristate</keyword>
<keyword id="KW-0540">Nuclease</keyword>
<keyword id="KW-0548">Nucleotidyltransferase</keyword>
<keyword id="KW-0597">Phosphoprotein</keyword>
<keyword id="KW-0645">Protease</keyword>
<keyword id="KW-0677">Repeat</keyword>
<keyword id="KW-0688">Ribosomal frameshifting</keyword>
<keyword id="KW-0694">RNA-binding</keyword>
<keyword id="KW-0695">RNA-directed DNA polymerase</keyword>
<keyword id="KW-0808">Transferase</keyword>
<keyword id="KW-1179">Viral genome integration</keyword>
<keyword id="KW-0543">Viral nucleoprotein</keyword>
<keyword id="KW-1163">Viral penetration into host nucleus</keyword>
<keyword id="KW-1188">Viral release from host cell</keyword>
<keyword id="KW-0946">Virion</keyword>
<keyword id="KW-0917">Virion maturation</keyword>
<keyword id="KW-1160">Virus entry into host cell</keyword>
<keyword id="KW-0862">Zinc</keyword>
<keyword id="KW-0863">Zinc-finger</keyword>
<feature type="initiator methionine" description="Removed; by host" evidence="1">
    <location>
        <position position="1"/>
    </location>
</feature>
<feature type="chain" id="PRO_0000261287" description="Gag-Pol polyprotein">
    <location>
        <begin position="2"/>
        <end position="1435"/>
    </location>
</feature>
<feature type="chain" id="PRO_0000042303" description="Matrix protein p17" evidence="1">
    <location>
        <begin position="2"/>
        <end position="132"/>
    </location>
</feature>
<feature type="chain" id="PRO_0000042304" description="Capsid protein p24" evidence="1">
    <location>
        <begin position="133"/>
        <end position="363"/>
    </location>
</feature>
<feature type="peptide" id="PRO_0000042305" description="Spacer peptide 1" evidence="1">
    <location>
        <begin position="364"/>
        <end position="377"/>
    </location>
</feature>
<feature type="chain" id="PRO_0000042306" description="Nucleocapsid protein p7" evidence="1">
    <location>
        <begin position="378"/>
        <end position="432"/>
    </location>
</feature>
<feature type="peptide" id="PRO_0000246737" description="Transframe peptide" evidence="8">
    <location>
        <begin position="433"/>
        <end position="440"/>
    </location>
</feature>
<feature type="chain" id="PRO_0000042307" description="p6-pol" evidence="8">
    <location>
        <begin position="441"/>
        <end position="488"/>
    </location>
</feature>
<feature type="chain" id="PRO_0000038649" description="Protease" evidence="1">
    <location>
        <begin position="489"/>
        <end position="587"/>
    </location>
</feature>
<feature type="chain" id="PRO_0000042308" description="Reverse transcriptase/ribonuclease H" evidence="1">
    <location>
        <begin position="588"/>
        <end position="1147"/>
    </location>
</feature>
<feature type="chain" id="PRO_0000042309" description="p51 RT" evidence="1">
    <location>
        <begin position="588"/>
        <end position="1027"/>
    </location>
</feature>
<feature type="chain" id="PRO_0000042310" description="p15" evidence="1">
    <location>
        <begin position="1028"/>
        <end position="1147"/>
    </location>
</feature>
<feature type="chain" id="PRO_0000042311" description="Integrase" evidence="1">
    <location>
        <begin position="1148"/>
        <end position="1435"/>
    </location>
</feature>
<feature type="domain" description="Peptidase A2" evidence="10">
    <location>
        <begin position="508"/>
        <end position="577"/>
    </location>
</feature>
<feature type="domain" description="Reverse transcriptase" evidence="11">
    <location>
        <begin position="631"/>
        <end position="821"/>
    </location>
</feature>
<feature type="domain" description="RNase H type-1" evidence="12">
    <location>
        <begin position="1021"/>
        <end position="1144"/>
    </location>
</feature>
<feature type="domain" description="Integrase catalytic" evidence="14">
    <location>
        <begin position="1201"/>
        <end position="1351"/>
    </location>
</feature>
<feature type="zinc finger region" description="CCHC-type 1" evidence="9">
    <location>
        <begin position="390"/>
        <end position="407"/>
    </location>
</feature>
<feature type="zinc finger region" description="CCHC-type 2" evidence="9">
    <location>
        <begin position="411"/>
        <end position="428"/>
    </location>
</feature>
<feature type="zinc finger region" description="Integrase-type" evidence="13">
    <location>
        <begin position="1150"/>
        <end position="1191"/>
    </location>
</feature>
<feature type="DNA-binding region" description="Integrase-type" evidence="15">
    <location>
        <begin position="1370"/>
        <end position="1417"/>
    </location>
</feature>
<feature type="region of interest" description="Interaction with Gp41" evidence="7">
    <location>
        <begin position="7"/>
        <end position="31"/>
    </location>
</feature>
<feature type="region of interest" description="Interaction with host CALM1" evidence="5">
    <location>
        <begin position="8"/>
        <end position="43"/>
    </location>
</feature>
<feature type="region of interest" description="Interaction with host AP3D1" evidence="7">
    <location>
        <begin position="12"/>
        <end position="19"/>
    </location>
</feature>
<feature type="region of interest" description="Interaction with membrane phosphatidylinositol 4,5-bisphosphate and RNA" evidence="7">
    <location>
        <begin position="14"/>
        <end position="33"/>
    </location>
</feature>
<feature type="region of interest" description="Interaction with membrane phosphatidylinositol 4,5-bisphosphate" evidence="7">
    <location>
        <begin position="73"/>
        <end position="77"/>
    </location>
</feature>
<feature type="region of interest" description="Disordered" evidence="17">
    <location>
        <begin position="106"/>
        <end position="128"/>
    </location>
</feature>
<feature type="region of interest" description="Interaction with human PPIA/CYPA and NUP153" evidence="7">
    <location>
        <begin position="189"/>
        <end position="227"/>
    </location>
</feature>
<feature type="region of interest" description="Dimerization/Multimerization of capsid protein p24" evidence="5">
    <location>
        <begin position="277"/>
        <end position="363"/>
    </location>
</feature>
<feature type="region of interest" description="Dimerization of protease" evidence="5">
    <location>
        <begin position="489"/>
        <end position="493"/>
    </location>
</feature>
<feature type="region of interest" description="Dimerization of protease" evidence="5">
    <location>
        <begin position="537"/>
        <end position="543"/>
    </location>
</feature>
<feature type="region of interest" description="Dimerization of protease" evidence="5">
    <location>
        <begin position="576"/>
        <end position="588"/>
    </location>
</feature>
<feature type="region of interest" description="RT 'primer grip'" evidence="1">
    <location>
        <begin position="814"/>
        <end position="822"/>
    </location>
</feature>
<feature type="short sequence motif" description="Nuclear export signal" evidence="1">
    <location>
        <begin position="16"/>
        <end position="22"/>
    </location>
</feature>
<feature type="short sequence motif" description="Nuclear localization signal" evidence="1">
    <location>
        <begin position="26"/>
        <end position="32"/>
    </location>
</feature>
<feature type="short sequence motif" description="Tryptophan repeat motif" evidence="1">
    <location>
        <begin position="985"/>
        <end position="1001"/>
    </location>
</feature>
<feature type="active site" description="For protease activity; shared with dimeric partner" evidence="16">
    <location>
        <position position="513"/>
    </location>
</feature>
<feature type="binding site" evidence="1">
    <location>
        <position position="697"/>
    </location>
    <ligand>
        <name>Mg(2+)</name>
        <dbReference type="ChEBI" id="CHEBI:18420"/>
        <label>1</label>
        <note>catalytic; for reverse transcriptase activity</note>
    </ligand>
</feature>
<feature type="binding site" evidence="1">
    <location>
        <position position="772"/>
    </location>
    <ligand>
        <name>Mg(2+)</name>
        <dbReference type="ChEBI" id="CHEBI:18420"/>
        <label>1</label>
        <note>catalytic; for reverse transcriptase activity</note>
    </ligand>
</feature>
<feature type="binding site" evidence="1">
    <location>
        <position position="773"/>
    </location>
    <ligand>
        <name>Mg(2+)</name>
        <dbReference type="ChEBI" id="CHEBI:18420"/>
        <label>1</label>
        <note>catalytic; for reverse transcriptase activity</note>
    </ligand>
</feature>
<feature type="binding site" evidence="1">
    <location>
        <position position="1030"/>
    </location>
    <ligand>
        <name>Mg(2+)</name>
        <dbReference type="ChEBI" id="CHEBI:18420"/>
        <label>2</label>
        <note>catalytic; for RNase H activity</note>
    </ligand>
</feature>
<feature type="binding site" evidence="1">
    <location>
        <position position="1065"/>
    </location>
    <ligand>
        <name>Mg(2+)</name>
        <dbReference type="ChEBI" id="CHEBI:18420"/>
        <label>2</label>
        <note>catalytic; for RNase H activity</note>
    </ligand>
</feature>
<feature type="binding site" evidence="1">
    <location>
        <position position="1085"/>
    </location>
    <ligand>
        <name>Mg(2+)</name>
        <dbReference type="ChEBI" id="CHEBI:18420"/>
        <label>2</label>
        <note>catalytic; for RNase H activity</note>
    </ligand>
</feature>
<feature type="binding site" evidence="1">
    <location>
        <position position="1136"/>
    </location>
    <ligand>
        <name>Mg(2+)</name>
        <dbReference type="ChEBI" id="CHEBI:18420"/>
        <label>2</label>
        <note>catalytic; for RNase H activity</note>
    </ligand>
</feature>
<feature type="binding site" evidence="13">
    <location>
        <position position="1159"/>
    </location>
    <ligand>
        <name>Zn(2+)</name>
        <dbReference type="ChEBI" id="CHEBI:29105"/>
    </ligand>
</feature>
<feature type="binding site" evidence="13">
    <location>
        <position position="1163"/>
    </location>
    <ligand>
        <name>Zn(2+)</name>
        <dbReference type="ChEBI" id="CHEBI:29105"/>
    </ligand>
</feature>
<feature type="binding site" evidence="13">
    <location>
        <position position="1187"/>
    </location>
    <ligand>
        <name>Zn(2+)</name>
        <dbReference type="ChEBI" id="CHEBI:29105"/>
    </ligand>
</feature>
<feature type="binding site" evidence="13">
    <location>
        <position position="1190"/>
    </location>
    <ligand>
        <name>Zn(2+)</name>
        <dbReference type="ChEBI" id="CHEBI:29105"/>
    </ligand>
</feature>
<feature type="binding site" evidence="1">
    <location>
        <position position="1211"/>
    </location>
    <ligand>
        <name>Mg(2+)</name>
        <dbReference type="ChEBI" id="CHEBI:18420"/>
        <label>3</label>
        <note>catalytic; for integrase activity</note>
    </ligand>
</feature>
<feature type="binding site" evidence="1">
    <location>
        <position position="1263"/>
    </location>
    <ligand>
        <name>Mg(2+)</name>
        <dbReference type="ChEBI" id="CHEBI:18420"/>
        <label>3</label>
        <note>catalytic; for integrase activity</note>
    </ligand>
</feature>
<feature type="binding site" evidence="5">
    <location>
        <position position="1299"/>
    </location>
    <ligand>
        <name>Mg(2+)</name>
        <dbReference type="ChEBI" id="CHEBI:18420"/>
        <label>3</label>
        <note>catalytic; for integrase activity</note>
    </ligand>
</feature>
<feature type="site" description="Cleavage; by viral protease" evidence="1">
    <location>
        <begin position="132"/>
        <end position="133"/>
    </location>
</feature>
<feature type="site" description="Cis/trans isomerization of proline peptide bond; by human PPIA/CYPA" evidence="1">
    <location>
        <begin position="221"/>
        <end position="222"/>
    </location>
</feature>
<feature type="site" description="Cleavage; by viral protease" evidence="1">
    <location>
        <begin position="363"/>
        <end position="364"/>
    </location>
</feature>
<feature type="site" description="Cleavage; by viral protease" evidence="1">
    <location>
        <begin position="377"/>
        <end position="378"/>
    </location>
</feature>
<feature type="site" description="Cleavage; by viral protease" evidence="8">
    <location>
        <begin position="432"/>
        <end position="433"/>
    </location>
</feature>
<feature type="site" description="Cleavage; by viral protease" evidence="1">
    <location>
        <begin position="440"/>
        <end position="441"/>
    </location>
</feature>
<feature type="site" description="Cleavage; by viral protease" evidence="1">
    <location>
        <begin position="488"/>
        <end position="489"/>
    </location>
</feature>
<feature type="site" description="Cleavage; by viral protease" evidence="1">
    <location>
        <begin position="587"/>
        <end position="588"/>
    </location>
</feature>
<feature type="site" description="Essential for RT p66/p51 heterodimerization" evidence="1">
    <location>
        <position position="988"/>
    </location>
</feature>
<feature type="site" description="Essential for RT p66/p51 heterodimerization" evidence="1">
    <location>
        <position position="1001"/>
    </location>
</feature>
<feature type="site" description="Cleavage; by viral protease; partial" evidence="1">
    <location>
        <begin position="1027"/>
        <end position="1028"/>
    </location>
</feature>
<feature type="site" description="Cleavage; by viral protease" evidence="1">
    <location>
        <begin position="1147"/>
        <end position="1148"/>
    </location>
</feature>
<feature type="modified residue" description="Phosphotyrosine; by host" evidence="1">
    <location>
        <position position="132"/>
    </location>
</feature>
<feature type="lipid moiety-binding region" description="N-myristoyl glycine; by host" evidence="1">
    <location>
        <position position="2"/>
    </location>
</feature>
<feature type="helix" evidence="22">
    <location>
        <begin position="282"/>
        <end position="284"/>
    </location>
</feature>
<feature type="helix" evidence="22">
    <location>
        <begin position="293"/>
        <end position="305"/>
    </location>
</feature>
<feature type="strand" evidence="22">
    <location>
        <begin position="307"/>
        <end position="309"/>
    </location>
</feature>
<feature type="helix" evidence="22">
    <location>
        <begin position="311"/>
        <end position="324"/>
    </location>
</feature>
<feature type="helix" evidence="22">
    <location>
        <begin position="328"/>
        <end position="337"/>
    </location>
</feature>
<feature type="helix" evidence="22">
    <location>
        <begin position="343"/>
        <end position="349"/>
    </location>
</feature>
<feature type="strand" evidence="22">
    <location>
        <begin position="352"/>
        <end position="355"/>
    </location>
</feature>
<feature type="helix" evidence="19">
    <location>
        <begin position="380"/>
        <end position="388"/>
    </location>
</feature>
<feature type="turn" evidence="19">
    <location>
        <begin position="393"/>
        <end position="395"/>
    </location>
</feature>
<feature type="strand" evidence="19">
    <location>
        <begin position="398"/>
        <end position="400"/>
    </location>
</feature>
<feature type="helix" evidence="19">
    <location>
        <begin position="402"/>
        <end position="404"/>
    </location>
</feature>
<feature type="strand" evidence="19">
    <location>
        <begin position="410"/>
        <end position="413"/>
    </location>
</feature>
<feature type="turn" evidence="19">
    <location>
        <begin position="414"/>
        <end position="417"/>
    </location>
</feature>
<feature type="helix" evidence="19">
    <location>
        <begin position="423"/>
        <end position="425"/>
    </location>
</feature>
<feature type="strand" evidence="20">
    <location>
        <begin position="493"/>
        <end position="495"/>
    </location>
</feature>
<feature type="strand" evidence="20">
    <location>
        <begin position="498"/>
        <end position="503"/>
    </location>
</feature>
<feature type="strand" evidence="20">
    <location>
        <begin position="506"/>
        <end position="512"/>
    </location>
</feature>
<feature type="strand" evidence="23">
    <location>
        <begin position="517"/>
        <end position="523"/>
    </location>
</feature>
<feature type="strand" evidence="20">
    <location>
        <begin position="531"/>
        <end position="537"/>
    </location>
</feature>
<feature type="strand" evidence="20">
    <location>
        <begin position="540"/>
        <end position="554"/>
    </location>
</feature>
<feature type="strand" evidence="20">
    <location>
        <begin position="557"/>
        <end position="566"/>
    </location>
</feature>
<feature type="helix" evidence="20">
    <location>
        <begin position="575"/>
        <end position="578"/>
    </location>
</feature>
<feature type="turn" evidence="20">
    <location>
        <begin position="579"/>
        <end position="582"/>
    </location>
</feature>
<feature type="strand" evidence="20">
    <location>
        <begin position="584"/>
        <end position="586"/>
    </location>
</feature>
<feature type="helix" evidence="21">
    <location>
        <begin position="1149"/>
        <end position="1155"/>
    </location>
</feature>
<feature type="helix" evidence="21">
    <location>
        <begin position="1161"/>
        <end position="1164"/>
    </location>
</feature>
<feature type="helix" evidence="21">
    <location>
        <begin position="1166"/>
        <end position="1173"/>
    </location>
</feature>
<feature type="helix" evidence="21">
    <location>
        <begin position="1177"/>
        <end position="1186"/>
    </location>
</feature>
<feature type="helix" evidence="21">
    <location>
        <begin position="1188"/>
        <end position="1191"/>
    </location>
</feature>
<evidence type="ECO:0000250" key="1"/>
<evidence type="ECO:0000250" key="2">
    <source>
        <dbReference type="UniProtKB" id="P03347"/>
    </source>
</evidence>
<evidence type="ECO:0000250" key="3">
    <source>
        <dbReference type="UniProtKB" id="P03366"/>
    </source>
</evidence>
<evidence type="ECO:0000250" key="4">
    <source>
        <dbReference type="UniProtKB" id="P03367"/>
    </source>
</evidence>
<evidence type="ECO:0000250" key="5">
    <source>
        <dbReference type="UniProtKB" id="P04585"/>
    </source>
</evidence>
<evidence type="ECO:0000250" key="6">
    <source>
        <dbReference type="UniProtKB" id="P12493"/>
    </source>
</evidence>
<evidence type="ECO:0000250" key="7">
    <source>
        <dbReference type="UniProtKB" id="P12497"/>
    </source>
</evidence>
<evidence type="ECO:0000255" key="8"/>
<evidence type="ECO:0000255" key="9">
    <source>
        <dbReference type="PROSITE-ProRule" id="PRU00047"/>
    </source>
</evidence>
<evidence type="ECO:0000255" key="10">
    <source>
        <dbReference type="PROSITE-ProRule" id="PRU00275"/>
    </source>
</evidence>
<evidence type="ECO:0000255" key="11">
    <source>
        <dbReference type="PROSITE-ProRule" id="PRU00405"/>
    </source>
</evidence>
<evidence type="ECO:0000255" key="12">
    <source>
        <dbReference type="PROSITE-ProRule" id="PRU00408"/>
    </source>
</evidence>
<evidence type="ECO:0000255" key="13">
    <source>
        <dbReference type="PROSITE-ProRule" id="PRU00450"/>
    </source>
</evidence>
<evidence type="ECO:0000255" key="14">
    <source>
        <dbReference type="PROSITE-ProRule" id="PRU00457"/>
    </source>
</evidence>
<evidence type="ECO:0000255" key="15">
    <source>
        <dbReference type="PROSITE-ProRule" id="PRU00506"/>
    </source>
</evidence>
<evidence type="ECO:0000255" key="16">
    <source>
        <dbReference type="PROSITE-ProRule" id="PRU10094"/>
    </source>
</evidence>
<evidence type="ECO:0000256" key="17">
    <source>
        <dbReference type="SAM" id="MobiDB-lite"/>
    </source>
</evidence>
<evidence type="ECO:0000305" key="18"/>
<evidence type="ECO:0007829" key="19">
    <source>
        <dbReference type="PDB" id="1F6U"/>
    </source>
</evidence>
<evidence type="ECO:0007829" key="20">
    <source>
        <dbReference type="PDB" id="1T7I"/>
    </source>
</evidence>
<evidence type="ECO:0007829" key="21">
    <source>
        <dbReference type="PDB" id="1WJA"/>
    </source>
</evidence>
<evidence type="ECO:0007829" key="22">
    <source>
        <dbReference type="PDB" id="2L6E"/>
    </source>
</evidence>
<evidence type="ECO:0007829" key="23">
    <source>
        <dbReference type="PDB" id="4A6C"/>
    </source>
</evidence>
<sequence>MGARASVLSAGELDKWEKIRLRPGGKKQYRLKHIVWASRELERFAVDPGLLETSEGCRQILGQLQPSLQTGSEELRSLYNTVATLYCVHQKIEVKDTKEALEKIEEEQNKSKKKAQQAAADTGNSSQVSQNYPIVQNLQGQMVHQAISPRTLNAWVKVVEEKAFSPEVIPMFSALSEGATPQDLNTMLNTVGGHQAAMQMLKETINEEAAEWDRLHPVHAGPIAPGQMREPRGSDIAGTTSTLQEQIGWMTNNPPIPVGEIYKRWIILGLNKIVRMYSPTSILDIRQGPKEPFRDYVDRFYKTLRAEQASQEVKNWMTETLLVQNANPDCKTILKALGPAATLEEMMTACQGVGGPGHKARVLAEAMSQVTNSATIMMQRGNFRNQRKTVKCFNCGKEGHIAKNCRAPRKKGCWKCGKEGHQMKDCTERQANFLREDLAFPQGKARKFSSEQTRANSPIRRERQVWRRDNNSLSEAGADRQGTVSFSFPQITLWQRPLVTIKIGGQLKEALLDTGADDTVLEEMNLPGRWKPKMIGGIGGFIKVRQYDQIPIEICGHKAIGTVLVGPTPVNIIGRNLLTQIGCTLNFPISPIETVPVKLKPGMDGPKVKQWPLTEEKIKALVEICTEMEKEGKISKIGPENPYNTPVFAIKKKDSTKWRKLVDFRELNKRTQDFWEVQLGIPHPAGLKKKKSVTVLDVGDAYFSVPLHEDFRKYTAFTIPSINNETPGTRYQYNVLPQGWKGSPAIFQSSMTTILEPFRKQNPDLVIYQYMDDLYVGSDLEIGQHRTKIEELRQHLLRWGFTTPDKKHQKEPPFLWMGYELHPDKWTVQPIVLPEKDSWTVNDIQKLVGKLNWASQIYAGIKVRQLCKLLRGTKALTEVIPLTEEAELELAENREILKEPVHGVYYDPSKDLIAEIQKQGQGQWTYQIYQEPFKNLKTGKYARTRGAHTNDVKQLTEAVQKIATESIVIWGKTPKFKLPIQKETWETWWTEYWQATWIPEWEFVNTPPLVKLWYQLEKEPIIGAETFYVDGAANRETKLGKAGYVTNKGRQKVVSLTDTTNQKTELQAIYLALQDSGLEVNIVTDSQYALGIIQAQPDRSESELVSQIIEQLIKKEKVYLAWVPAHKGIGGNEQVDKLVSAGIRKVLFLDGIDKAQEEHEKYHSNWRAMASDFNLPPVVAKEIVASCDKCQLKGEAMHGQVDCSPGIWQLDCTHLEGKVILVAVHVASGYIEAEVIPAETGQETAYFLLKLAGRWPVTTIHTDNGSNFTSATVKAACWWAGIKQEFGIPYNPQSQGVVESMNKELKKIIGQVRDQAEHLKTAVQMAVFIHNFKRKGGIGGYSAGERIVDIIATDIQTKELQKQITKIQNFRVYYRDSRDPLWKGPAKLLWKGEGAVVIQDNSDIKVVPRRKAKIIRDYGKQMAGDDCVAGRQDED</sequence>
<proteinExistence type="evidence at protein level"/>
<organism>
    <name type="scientific">Human immunodeficiency virus type 1 group M subtype B (isolate YU-2)</name>
    <name type="common">HIV-1</name>
    <dbReference type="NCBI Taxonomy" id="362651"/>
    <lineage>
        <taxon>Viruses</taxon>
        <taxon>Riboviria</taxon>
        <taxon>Pararnavirae</taxon>
        <taxon>Artverviricota</taxon>
        <taxon>Revtraviricetes</taxon>
        <taxon>Ortervirales</taxon>
        <taxon>Retroviridae</taxon>
        <taxon>Orthoretrovirinae</taxon>
        <taxon>Lentivirus</taxon>
        <taxon>Human immunodeficiency virus type 1</taxon>
    </lineage>
</organism>
<comment type="function">
    <molecule>Gag-Pol polyprotein</molecule>
    <text evidence="1">Mediates, with Gag polyprotein, the essential events in virion assembly, including binding the plasma membrane, making the protein-protein interactions necessary to create spherical particles, recruiting the viral Env proteins, and packaging the genomic RNA via direct interactions with the RNA packaging sequence (Psi). Gag-Pol polyprotein may regulate its own translation, by the binding genomic RNA in the 5'-UTR. At low concentration, the polyprotein would promote translation, whereas at high concentration, the polyprotein would encapsidate genomic RNA and then shut off translation.</text>
</comment>
<comment type="function">
    <molecule>Matrix protein p17</molecule>
    <text evidence="7">Targets the polyprotein to the plasma membrane via a multipartite membrane-binding signal, that includes its myristoylated N-terminus. Matrix protein is part of the pre-integration complex. Implicated in the release from host cell mediated by Vpu. Binds to RNA.</text>
</comment>
<comment type="function">
    <molecule>Capsid protein p24</molecule>
    <text evidence="5 7">Forms the conical core that encapsulates the genomic RNA-nucleocapsid complex in the virion. Most core are conical, with only 7% tubular. The core is constituted by capsid protein hexamer subunits. The core is disassembled soon after virion entry (By similarity). Host restriction factors such as TRIM5-alpha or TRIMCyp bind retroviral capsids and cause premature capsid disassembly, leading to blocks in reverse transcription. Capsid restriction by TRIM5 is one of the factors which restricts HIV-1 to the human species. Host PIN1 apparently facilitates the virion uncoating. On the other hand, interactions with PDZD8 or CYPA stabilize the capsid.</text>
</comment>
<comment type="function">
    <molecule>Nucleocapsid protein p7</molecule>
    <text evidence="5">Encapsulates and protects viral dimeric unspliced genomic RNA (gRNA). Binds these RNAs through its zinc fingers. Acts as a nucleic acid chaperone which is involved in rearangement of nucleic acid secondary structure during gRNA retrotranscription. Also facilitates template switch leading to recombination. As part of the polyprotein, participates in gRNA dimerization, packaging, tRNA incorporation and virion assembly.</text>
</comment>
<comment type="function">
    <molecule>Protease</molecule>
    <text evidence="5 10">Aspartyl protease that mediates proteolytic cleavages of Gag and Gag-Pol polyproteins during or shortly after the release of the virion from the plasma membrane. Cleavages take place as an ordered, step-wise cascade to yield mature proteins. This process is called maturation. Displays maximal activity during the budding process just prior to particle release from the cell. Also cleaves Nef and Vif, probably concomitantly with viral structural proteins on maturation of virus particles. Hydrolyzes host EIF4GI and PABP1 in order to shut off the capped cellular mRNA translation. The resulting inhibition of cellular protein synthesis serves to ensure maximal viral gene expression and to evade host immune response. Also mediates cleavage of host YTHDF3. Mediates cleavage of host CARD8, thereby activating the CARD8 inflammasome, leading to the clearance of latent HIV-1 in patient CD4(+) T-cells after viral reactivation; in contrast, HIV-1 can evade CARD8-sensing when its protease remains inactive in infected cells prior to viral budding (By similarity).</text>
</comment>
<comment type="function">
    <molecule>Reverse transcriptase/ribonuclease H</molecule>
    <text evidence="5">Multifunctional enzyme that converts the viral RNA genome into dsDNA in the cytoplasm, shortly after virus entry into the cell. This enzyme displays a DNA polymerase activity that can copy either DNA or RNA templates, and a ribonuclease H (RNase H) activity that cleaves the RNA strand of RNA-DNA heteroduplexes in a partially processive 3' to 5' endonucleasic mode. Conversion of viral genomic RNA into dsDNA requires many steps. A tRNA(3)-Lys binds to the primer-binding site (PBS) situated at the 5'-end of the viral RNA. RT uses the 3' end of the tRNA primer to perform a short round of RNA-dependent minus-strand DNA synthesis. The reading proceeds through the U5 region and ends after the repeated (R) region which is present at both ends of viral RNA. The portion of the RNA-DNA heteroduplex is digested by the RNase H, resulting in a ssDNA product attached to the tRNA primer. This ssDNA/tRNA hybridizes with the identical R region situated at the 3' end of viral RNA. This template exchange, known as minus-strand DNA strong stop transfer, can be either intra- or intermolecular. RT uses the 3' end of this newly synthesized short ssDNA to perform the RNA-dependent minus-strand DNA synthesis of the whole template. RNase H digests the RNA template except for two polypurine tracts (PPTs) situated at the 5'-end and near the center of the genome. It is not clear if both polymerase and RNase H activities are simultaneous. RNase H probably can proceed both in a polymerase-dependent (RNA cut into small fragments by the same RT performing DNA synthesis) and a polymerase-independent mode (cleavage of remaining RNA fragments by free RTs). Secondly, RT performs DNA-directed plus-strand DNA synthesis using the PPTs that have not been removed by RNase H as primers. PPTs and tRNA primers are then removed by RNase H. The 3' and 5' ssDNA PBS regions hybridize to form a circular dsDNA intermediate. Strand displacement synthesis by RT to the PBS and PPT ends produces a blunt ended, linear dsDNA copy of the viral genome that includes long terminal repeats (LTRs) at both ends.</text>
</comment>
<comment type="function">
    <molecule>Integrase</molecule>
    <text evidence="5">Catalyzes viral DNA integration into the host chromosome, by performing a series of DNA cutting and joining reactions. This enzyme activity takes place after virion entry into a cell and reverse transcription of the RNA genome in dsDNA. The first step in the integration process is 3' processing. This step requires a complex comprising the viral genome, matrix protein, Vpr and integrase. This complex is called the pre-integration complex (PIC). The integrase protein removes 2 nucleotides from each 3' end of the viral DNA, leaving recessed CA OH's at the 3' ends. In the second step, the PIC enters cell nucleus. This process is mediated through integrase and Vpr proteins, and allows the virus to infect a non dividing cell. This ability to enter the nucleus is specific of lentiviruses, other retroviruses cannot and rely on cell division to access cell chromosomes. In the third step, termed strand transfer, the integrase protein joins the previously processed 3' ends to the 5' ends of strands of target cellular DNA at the site of integration. The 5'-ends are produced by integrase-catalyzed staggered cuts, 5 bp apart. A Y-shaped, gapped, recombination intermediate results, with the 5'-ends of the viral DNA strands and the 3' ends of target DNA strands remaining unjoined, flanking a gap of 5 bp. The last step is viral DNA integration into host chromosome. This involves host DNA repair synthesis in which the 5 bp gaps between the unjoined strands are filled in and then ligated. Since this process occurs at both cuts flanking the HIV genome, a 5 bp duplication of host DNA is produced at the ends of HIV-1 integration. Alternatively, Integrase may catalyze the excision of viral DNA just after strand transfer, this is termed disintegration.</text>
</comment>
<comment type="catalytic activity">
    <reaction evidence="10">
        <text>Specific for a P1 residue that is hydrophobic, and P1' variable, but often Pro.</text>
        <dbReference type="EC" id="3.4.23.16"/>
    </reaction>
</comment>
<comment type="catalytic activity">
    <reaction evidence="1">
        <text>Endohydrolysis of RNA in RNA/DNA hybrids. Three different cleavage modes: 1. sequence-specific internal cleavage of RNA. Human immunodeficiency virus type 1 and Moloney murine leukemia virus enzymes prefer to cleave the RNA strand one nucleotide away from the RNA-DNA junction. 2. RNA 5'-end directed cleavage 13-19 nucleotides from the RNA end. 3. DNA 3'-end directed cleavage 15-20 nucleotides away from the primer terminus.</text>
        <dbReference type="EC" id="3.1.26.13"/>
    </reaction>
</comment>
<comment type="catalytic activity">
    <reaction evidence="1">
        <text>3'-end directed exonucleolytic cleavage of viral RNA-DNA hybrid.</text>
        <dbReference type="EC" id="3.1.13.2"/>
    </reaction>
</comment>
<comment type="catalytic activity">
    <reaction evidence="11">
        <text>DNA(n) + a 2'-deoxyribonucleoside 5'-triphosphate = DNA(n+1) + diphosphate</text>
        <dbReference type="Rhea" id="RHEA:22508"/>
        <dbReference type="Rhea" id="RHEA-COMP:17339"/>
        <dbReference type="Rhea" id="RHEA-COMP:17340"/>
        <dbReference type="ChEBI" id="CHEBI:33019"/>
        <dbReference type="ChEBI" id="CHEBI:61560"/>
        <dbReference type="ChEBI" id="CHEBI:173112"/>
        <dbReference type="EC" id="2.7.7.49"/>
    </reaction>
</comment>
<comment type="catalytic activity">
    <reaction evidence="11">
        <text>DNA(n) + a 2'-deoxyribonucleoside 5'-triphosphate = DNA(n+1) + diphosphate</text>
        <dbReference type="Rhea" id="RHEA:22508"/>
        <dbReference type="Rhea" id="RHEA-COMP:17339"/>
        <dbReference type="Rhea" id="RHEA-COMP:17340"/>
        <dbReference type="ChEBI" id="CHEBI:33019"/>
        <dbReference type="ChEBI" id="CHEBI:61560"/>
        <dbReference type="ChEBI" id="CHEBI:173112"/>
        <dbReference type="EC" id="2.7.7.7"/>
    </reaction>
</comment>
<comment type="cofactor">
    <cofactor evidence="1">
        <name>Mg(2+)</name>
        <dbReference type="ChEBI" id="CHEBI:18420"/>
    </cofactor>
    <text evidence="1">Binds 2 magnesium ions for reverse transcriptase polymerase activity.</text>
</comment>
<comment type="cofactor">
    <cofactor evidence="1">
        <name>Mg(2+)</name>
        <dbReference type="ChEBI" id="CHEBI:18420"/>
    </cofactor>
    <text evidence="1">Binds 2 magnesium ions for ribonuclease H (RNase H) activity. Substrate-binding is a precondition for magnesium binding.</text>
</comment>
<comment type="cofactor">
    <cofactor evidence="1">
        <name>Mg(2+)</name>
        <dbReference type="ChEBI" id="CHEBI:18420"/>
    </cofactor>
    <text evidence="1">Magnesium ions are required for integrase activity. Binds at least 1, maybe 2 magnesium ions.</text>
</comment>
<comment type="activity regulation">
    <text evidence="1">Protease: The viral protease is inhibited by many synthetic protease inhibitors (PIs), such as amprenavir, atazanavir, indinavir, loprinavir, nelfinavir, ritonavir and saquinavir. Use of protease inhibitors in tritherapy regimens permit more ambitious therapeutic strategies. Reverse transcriptase/ribonuclease H: RT can be inhibited either by nucleoside RT inhibitors (NRTIs) or by non nucleoside RT inhibitors (NNRTIs). NRTIs act as chain terminators, whereas NNRTIs inhibit DNA polymerization by binding a small hydrophobic pocket near the RT active site and inducing an allosteric change in this region. Classical NRTIs are abacavir, adefovir (PMEA), didanosine (ddI), lamivudine (3TC), stavudine (d4T), tenofovir (PMPA), zalcitabine (ddC), and zidovudine (AZT). Classical NNRTIs are atevirdine (BHAP U-87201E), delavirdine, efavirenz (DMP-266), emivirine (I-EBU), and nevirapine (BI-RG-587). The tritherapies used as a basic effective treatment of AIDS associate two NRTIs and one NNRTI.</text>
</comment>
<comment type="subunit">
    <molecule>Matrix protein p17</molecule>
    <text evidence="5 7">Homotrimer; further assembles as hexamers of trimers (By similarity). Interacts with gp41 (via C-terminus) (By similarity). Interacts with host CALM1; this interaction induces a conformational change in the Matrix protein, triggering exposure of the myristate group (By similarity). Interacts with host AP3D1; this interaction allows the polyprotein trafficking to multivesicular bodies during virus assembly (By similarity). Part of the pre-integration complex (PIC) which is composed of viral genome, matrix protein, Vpr and integrase (By similarity).</text>
</comment>
<comment type="subunit">
    <molecule>Capsid protein p24</molecule>
    <text evidence="5 7">Homodimer; the homodimer further multimerizes as homohexamers or homopentamers. Interacts with human PPIA/CYPA (By similarity); This interaction stabilizes the capsid. Interacts with human NUP153 (By similarity). Interacts with host PDZD8; this interaction stabilizes the capsid (By similarity). Interacts with monkey TRIM5; this interaction destabilizes the capsid (By similarity).</text>
</comment>
<comment type="subunit">
    <molecule>Protease</molecule>
    <text evidence="5 7">Homodimer, whose active site consists of two apposed aspartic acid residues.</text>
</comment>
<comment type="subunit">
    <molecule>Reverse transcriptase/ribonuclease H</molecule>
    <text evidence="3">Heterodimer of p66 RT and p51 RT (RT p66/p51) (By similarity). Heterodimerization of RT is essential for DNA polymerase activity (By similarity). The overall folding of the subdomains is similar in p66 RT and p51 RT but the spatial arrangements of the subdomains are dramatically different (By similarity).</text>
</comment>
<comment type="subunit">
    <molecule>Integrase</molecule>
    <text evidence="4 5 7">Homotetramer; may further associate as a homohexadecamer (By similarity). Part of the pre-integration complex (PIC) which is composed of viral genome, matrix protein, Vpr and integrase. Interacts with human SMARCB1/INI1 and human PSIP1/LEDGF isoform 1. Interacts with human KPNA3; this interaction might play a role in nuclear import of the pre-integration complex (By similarity). Interacts with human NUP153; this interaction might play a role in nuclear import of the pre-integration complex (By similarity).</text>
</comment>
<comment type="interaction">
    <interactant intactId="EBI-911612">
        <id>P35963</id>
    </interactant>
    <interactant intactId="EBI-357430">
        <id>P61758</id>
        <label>VBP1</label>
    </interactant>
    <organismsDiffer>true</organismsDiffer>
    <experiments>3</experiments>
</comment>
<comment type="subcellular location">
    <molecule>Gag-Pol polyprotein</molecule>
    <subcellularLocation>
        <location>Host cell membrane</location>
        <topology>Lipid-anchor</topology>
    </subcellularLocation>
    <subcellularLocation>
        <location>Host endosome</location>
        <location>Host multivesicular body</location>
    </subcellularLocation>
    <text evidence="7">These locations are linked to virus assembly sites. The main location is the cell membrane, but under some circumstances, late endosomal compartments can serve as productive sites for virion assembly.</text>
</comment>
<comment type="subcellular location">
    <molecule>Matrix protein p17</molecule>
    <subcellularLocation>
        <location>Virion membrane</location>
        <topology evidence="18">Lipid-anchor</topology>
    </subcellularLocation>
    <subcellularLocation>
        <location evidence="1">Host nucleus</location>
    </subcellularLocation>
    <subcellularLocation>
        <location evidence="1">Host cytoplasm</location>
    </subcellularLocation>
</comment>
<comment type="subcellular location">
    <molecule>Capsid protein p24</molecule>
    <subcellularLocation>
        <location evidence="18">Virion</location>
    </subcellularLocation>
</comment>
<comment type="subcellular location">
    <molecule>Nucleocapsid protein p7</molecule>
    <subcellularLocation>
        <location evidence="18">Virion</location>
    </subcellularLocation>
</comment>
<comment type="subcellular location">
    <molecule>Reverse transcriptase/ribonuclease H</molecule>
    <subcellularLocation>
        <location evidence="18">Virion</location>
    </subcellularLocation>
</comment>
<comment type="subcellular location">
    <molecule>Integrase</molecule>
    <subcellularLocation>
        <location evidence="18">Virion</location>
    </subcellularLocation>
    <subcellularLocation>
        <location evidence="18">Host nucleus</location>
    </subcellularLocation>
    <subcellularLocation>
        <location evidence="18">Host cytoplasm</location>
    </subcellularLocation>
    <text evidence="18">Nuclear at initial phase, cytoplasmic at assembly.</text>
</comment>
<comment type="alternative products">
    <event type="ribosomal frameshifting"/>
    <isoform>
        <id>P35963-1</id>
        <name>Gag-Pol polyprotein</name>
        <sequence type="displayed"/>
    </isoform>
    <isoform>
        <id>P35962-1</id>
        <name>Gag polyprotein</name>
        <sequence type="external"/>
    </isoform>
    <text>Translation results in the formation of the Gag polyprotein most of the time. Ribosomal frameshifting at the gag-pol genes boundary occurs at low frequency and produces the Gag-Pol polyprotein. This strategy of translation probably allows the virus to modulate the quantity of each viral protein. Maintenance of a correct Gag to Gag-Pol ratio is essential for RNA dimerization and viral infectivity.</text>
</comment>
<comment type="domain">
    <molecule>Reverse transcriptase/ribonuclease H</molecule>
    <text evidence="1">RT is structured in five subdomains: finger, palm, thumb, connection and RNase H. Within the palm subdomain, the 'primer grip' region is thought to be involved in the positioning of the primer terminus for accommodating the incoming nucleotide. The RNase H domain stabilizes the association of RT with primer-template.</text>
</comment>
<comment type="domain">
    <molecule>Reverse transcriptase/ribonuclease H</molecule>
    <text evidence="1">The tryptophan repeat motif is involved in RT p66/p51 dimerization (By similarity).</text>
</comment>
<comment type="domain">
    <molecule>Integrase</molecule>
    <text evidence="1">The core domain contains the D-x(n)-D-x(35)-E motif, named for the phylogenetically conserved glutamic acid and aspartic acid residues and the invariant 35 amino acid spacing between the second and third acidic residues. Each acidic residue of the D,D(35)E motif is independently essential for the 3'-processing and strand transfer activities of purified integrase protein.</text>
</comment>
<comment type="PTM">
    <molecule>Gag-Pol polyprotein</molecule>
    <text evidence="5 11">Specific enzymatic cleavages by the viral protease yield mature proteins. The protease is released by autocatalytic cleavage. The polyprotein is cleaved during and after budding, this process is termed maturation. Proteolytic cleavage of p66 RT removes the RNase H domain to yield the p51 RT subunit. Nucleocapsid protein p7 might be further cleaved after virus entry.</text>
</comment>
<comment type="PTM">
    <molecule>Matrix protein p17</molecule>
    <text evidence="5">Tyrosine phosphorylated presumably in the virion by a host kinase. Phosphorylation is apparently not a major regulator of membrane association.</text>
</comment>
<comment type="PTM">
    <molecule>Capsid protein p24</molecule>
    <text evidence="6">Phosphorylated possibly by host MAPK1; this phosphorylation is necessary for Pin1-mediated virion uncoating.</text>
</comment>
<comment type="PTM">
    <molecule>Nucleocapsid protein p7</molecule>
    <text evidence="2">Methylated by host PRMT6, impairing its function by reducing RNA annealing and the initiation of reverse transcription.</text>
</comment>
<comment type="miscellaneous">
    <molecule>Reverse transcriptase/ribonuclease H</molecule>
    <text evidence="1">Error-prone enzyme that lacks a proof-reading function. High mutations rate is a direct consequence of this characteristic. RT also displays frequent template switching leading to high recombination rate. Recombination mostly occurs between homologous regions of the two copackaged RNA genomes. If these two RNA molecules derive from different viral strains, reverse transcription will give rise to highly recombinated proviral DNAs.</text>
</comment>
<comment type="miscellaneous">
    <text>HIV-1 lineages are divided in three main groups, M (for Major), O (for Outlier), and N (for New, or Non-M, Non-O). The vast majority of strains found worldwide belong to the group M. Group O seems to be endemic to and largely confined to Cameroon and neighboring countries in West Central Africa, where these viruses represent a small minority of HIV-1 strains. The group N is represented by a limited number of isolates from Cameroonian persons. The group M is further subdivided in 9 clades or subtypes (A to D, F to H, J and K).</text>
</comment>
<comment type="miscellaneous">
    <text>Resistance to inhibitors associated with mutations are observed both in viral protease and in reverse transcriptase. Most of the time, single mutations confer only a modest reduction in drug susceptibility. Combination of several mutations is usually required to develop a high-level drug resistance. These mutations are predominantly found in clade B viruses and not in other genotypes. They are listed in the clade B representative isolate HXB2 (AC P04585).</text>
</comment>
<comment type="miscellaneous">
    <molecule>Isoform Gag-Pol polyprotein</molecule>
    <text>Produced by -1 ribosomal frameshifting.</text>
</comment>
<comment type="online information" name="HIV drug resistance mutations">
    <link uri="https://www.iasusa.org/hiv-drug-resistance/hiv-drug-resistance-mutations/"/>
</comment>
<comment type="online information" name="hivdb">
    <link uri="https://hivdb.stanford.edu"/>
    <text>HIV drug resistance database</text>
</comment>
<accession>P35963</accession>
<reference key="1">
    <citation type="journal article" date="1992" name="J. Virol.">
        <title>Complete nucleotide sequence, genome organization, and biological properties of human immunodeficiency virus type 1 in vivo: evidence for limited defectiveness and complementation.</title>
        <authorList>
            <person name="Li Y."/>
            <person name="Hui H."/>
            <person name="Burgess C.J."/>
            <person name="Price R.W."/>
            <person name="Sharp P.M."/>
            <person name="Hahn B.H."/>
            <person name="Shaw G.M."/>
        </authorList>
    </citation>
    <scope>NUCLEOTIDE SEQUENCE [GENOMIC RNA]</scope>
</reference>
<reference key="2">
    <citation type="journal article" date="1996" name="Curr. Top. Microbiol. Immunol.">
        <title>Proteolytic processing and particle maturation.</title>
        <authorList>
            <person name="Vogt V.M."/>
        </authorList>
    </citation>
    <scope>REVIEW</scope>
</reference>
<reference key="3">
    <citation type="journal article" date="1999" name="J. Mol. Biol.">
        <title>Structural biology of HIV.</title>
        <authorList>
            <person name="Turner B.G."/>
            <person name="Summers M.F."/>
        </authorList>
    </citation>
    <scope>REVIEW</scope>
</reference>
<reference key="4">
    <citation type="journal article" date="2001" name="Annu. Rev. Genet.">
        <title>Mechanisms of retroviral recombination.</title>
        <authorList>
            <person name="Negroni M."/>
            <person name="Buc H."/>
        </authorList>
    </citation>
    <scope>REVIEW</scope>
</reference>
<reference key="5">
    <citation type="journal article" date="2002" name="Genome Biol.">
        <title>Retroviral proteases.</title>
        <authorList>
            <person name="Dunn B.M."/>
            <person name="Goodenow M.M."/>
            <person name="Gustchina A."/>
            <person name="Wlodawer A."/>
        </authorList>
    </citation>
    <scope>REVIEW</scope>
</reference>
<reference key="6">
    <citation type="journal article" date="2003" name="Biochim. Biophys. Acta">
        <title>Role of HIV-1 Gag domains in viral assembly.</title>
        <authorList>
            <person name="Scarlata S."/>
            <person name="Carter C."/>
        </authorList>
    </citation>
    <scope>REVIEW</scope>
</reference>
<reference key="7">
    <citation type="journal article" date="1997" name="Nat. Struct. Biol.">
        <title>Solution structure of the N-terminal zinc binding domain of HIV-1 integrase.</title>
        <authorList>
            <person name="Cai M."/>
            <person name="Zheng R."/>
            <person name="Caffrey M."/>
            <person name="Craigie R."/>
            <person name="Clore G.M."/>
            <person name="Gronenborn A.M."/>
        </authorList>
    </citation>
    <scope>STRUCTURE BY NMR OF 1148-1194</scope>
</reference>
<reference key="8">
    <citation type="journal article" date="2000" name="J. Mol. Biol.">
        <title>NMR structure of the HIV-1 nucleocapsid protein bound to stem-loop SL2 of the psi-RNA packaging signal. Implications for genome recognition.</title>
        <authorList>
            <person name="Amarasinghe G.K."/>
            <person name="De Guzman R.N."/>
            <person name="Turner R.B."/>
            <person name="Chancellor K.J."/>
            <person name="Wu Z.R."/>
            <person name="Summers M.F."/>
        </authorList>
    </citation>
    <scope>STRUCTURE BY NMR OF 379-432</scope>
</reference>
<reference key="9">
    <citation type="journal article" date="2002" name="Protein Sci.">
        <title>Lack of synergy for inhibitors targeting a multi-drug-resistant HIV-1 protease.</title>
        <authorList>
            <person name="King N.M."/>
            <person name="Melnick L."/>
            <person name="Prabu-Jeyabalan M."/>
            <person name="Nalivaika E.A."/>
            <person name="Yang S.S."/>
            <person name="Gao Y."/>
            <person name="Nie X."/>
            <person name="Zepp C."/>
            <person name="Heefner D.L."/>
            <person name="Schiffer C.A."/>
        </authorList>
    </citation>
    <scope>X-RAY CRYSTALLOGRAPHY (2.2 ANGSTROMS) OF 489-587 IN COMPLEX WITH INDINAVIR ANALOGS</scope>
</reference>
<reference key="10">
    <citation type="journal article" date="2005" name="J. Med. Chem.">
        <title>Discovery and selection of TMC114, a next generation HIV-1 protease inhibitor.</title>
        <authorList>
            <person name="Surleraux D.L."/>
            <person name="Tahri A."/>
            <person name="Verschueren W.G."/>
            <person name="Pille G.M."/>
            <person name="de Kock H.A."/>
            <person name="Jonckers T.H."/>
            <person name="Peeters A."/>
            <person name="De Meyer S."/>
            <person name="Azijn H."/>
            <person name="Pauwels R."/>
            <person name="de Bethune M.P."/>
            <person name="King N.M."/>
            <person name="Prabu-Jeyabalan M."/>
            <person name="Schiffer C.A."/>
            <person name="Wigerinck P.B."/>
        </authorList>
    </citation>
    <scope>X-RAY CRYSTALLOGRAPHY (1.35 ANGSTROMS) OF 489-587</scope>
</reference>
<dbReference type="EC" id="3.4.23.16"/>
<dbReference type="EC" id="2.7.7.49"/>
<dbReference type="EC" id="2.7.7.7"/>
<dbReference type="EC" id="3.1.26.13"/>
<dbReference type="EC" id="3.1.13.2"/>
<dbReference type="EC" id="2.7.7.-" evidence="5"/>
<dbReference type="EC" id="3.1.-.-" evidence="5"/>
<dbReference type="EMBL" id="M93258">
    <property type="status" value="NOT_ANNOTATED_CDS"/>
    <property type="molecule type" value="Genomic_RNA"/>
</dbReference>
<dbReference type="PIR" id="B44001">
    <property type="entry name" value="B44001"/>
</dbReference>
<dbReference type="PDB" id="1F6U">
    <property type="method" value="NMR"/>
    <property type="chains" value="A=381-432"/>
</dbReference>
<dbReference type="PDB" id="1K6C">
    <property type="method" value="X-ray"/>
    <property type="resolution" value="2.20 A"/>
    <property type="chains" value="A/B=489-587"/>
</dbReference>
<dbReference type="PDB" id="1K6P">
    <property type="method" value="X-ray"/>
    <property type="resolution" value="2.20 A"/>
    <property type="chains" value="A/B=489-587"/>
</dbReference>
<dbReference type="PDB" id="1K6T">
    <property type="method" value="X-ray"/>
    <property type="resolution" value="2.25 A"/>
    <property type="chains" value="A/B=489-587"/>
</dbReference>
<dbReference type="PDB" id="1K6V">
    <property type="method" value="X-ray"/>
    <property type="resolution" value="2.00 A"/>
    <property type="chains" value="A/B=489-587"/>
</dbReference>
<dbReference type="PDB" id="1MFS">
    <property type="method" value="NMR"/>
    <property type="chains" value="A=378-432"/>
</dbReference>
<dbReference type="PDB" id="1T7I">
    <property type="method" value="X-ray"/>
    <property type="resolution" value="1.35 A"/>
    <property type="chains" value="A/B=489-587"/>
</dbReference>
<dbReference type="PDB" id="1T7J">
    <property type="method" value="X-ray"/>
    <property type="resolution" value="2.20 A"/>
    <property type="chains" value="A/B=489-587"/>
</dbReference>
<dbReference type="PDB" id="1WJA">
    <property type="method" value="NMR"/>
    <property type="chains" value="A/B=1148-1194"/>
</dbReference>
<dbReference type="PDB" id="1WJC">
    <property type="method" value="NMR"/>
    <property type="chains" value="A/B=1148-1194"/>
</dbReference>
<dbReference type="PDB" id="2JO0">
    <property type="method" value="NMR"/>
    <property type="chains" value="A=278-363"/>
</dbReference>
<dbReference type="PDB" id="2L6E">
    <property type="method" value="NMR"/>
    <property type="chains" value="A=280-363"/>
</dbReference>
<dbReference type="PDB" id="3OQ7">
    <property type="method" value="X-ray"/>
    <property type="resolution" value="1.71 A"/>
    <property type="chains" value="A=489-587"/>
</dbReference>
<dbReference type="PDB" id="3OQA">
    <property type="method" value="X-ray"/>
    <property type="resolution" value="2.25 A"/>
    <property type="chains" value="A=489-587"/>
</dbReference>
<dbReference type="PDB" id="3OQD">
    <property type="method" value="X-ray"/>
    <property type="resolution" value="1.71 A"/>
    <property type="chains" value="A=489-587"/>
</dbReference>
<dbReference type="PDB" id="3OTS">
    <property type="method" value="X-ray"/>
    <property type="resolution" value="1.70 A"/>
    <property type="chains" value="A/B=489-587, P=130-136"/>
</dbReference>
<dbReference type="PDB" id="3OTY">
    <property type="method" value="X-ray"/>
    <property type="resolution" value="1.75 A"/>
    <property type="chains" value="A/B=489-587, P=1025-1031"/>
</dbReference>
<dbReference type="PDB" id="3OU1">
    <property type="method" value="X-ray"/>
    <property type="resolution" value="1.80 A"/>
    <property type="chains" value="A/B=489-587, P=1145-1151"/>
</dbReference>
<dbReference type="PDB" id="3OU3">
    <property type="method" value="X-ray"/>
    <property type="resolution" value="1.70 A"/>
    <property type="chains" value="A/B=489-587, C=585-591"/>
</dbReference>
<dbReference type="PDB" id="3OU4">
    <property type="method" value="X-ray"/>
    <property type="resolution" value="1.60 A"/>
    <property type="chains" value="A/B=489-587, C=488-492"/>
</dbReference>
<dbReference type="PDB" id="3OUA">
    <property type="method" value="X-ray"/>
    <property type="resolution" value="1.70 A"/>
    <property type="chains" value="A/B=489-587"/>
</dbReference>
<dbReference type="PDB" id="3OUB">
    <property type="method" value="X-ray"/>
    <property type="resolution" value="1.60 A"/>
    <property type="chains" value="A/B=489-587"/>
</dbReference>
<dbReference type="PDB" id="3OUC">
    <property type="method" value="X-ray"/>
    <property type="resolution" value="2.00 A"/>
    <property type="chains" value="A/B=489-587, P=375-381"/>
</dbReference>
<dbReference type="PDB" id="3OUD">
    <property type="method" value="X-ray"/>
    <property type="resolution" value="1.80 A"/>
    <property type="chains" value="A/B=489-587"/>
</dbReference>
<dbReference type="PDB" id="3PJ6">
    <property type="method" value="X-ray"/>
    <property type="resolution" value="2.25 A"/>
    <property type="chains" value="A=489-587"/>
</dbReference>
<dbReference type="PDB" id="3U7S">
    <property type="method" value="X-ray"/>
    <property type="resolution" value="2.05 A"/>
    <property type="chains" value="A/B=489-587"/>
</dbReference>
<dbReference type="PDB" id="4A6B">
    <property type="method" value="X-ray"/>
    <property type="resolution" value="1.80 A"/>
    <property type="chains" value="A/B=489-587"/>
</dbReference>
<dbReference type="PDB" id="4A6C">
    <property type="method" value="X-ray"/>
    <property type="resolution" value="1.50 A"/>
    <property type="chains" value="A/B=489-587"/>
</dbReference>
<dbReference type="PDBsum" id="1F6U"/>
<dbReference type="PDBsum" id="1K6C"/>
<dbReference type="PDBsum" id="1K6P"/>
<dbReference type="PDBsum" id="1K6T"/>
<dbReference type="PDBsum" id="1K6V"/>
<dbReference type="PDBsum" id="1MFS"/>
<dbReference type="PDBsum" id="1T7I"/>
<dbReference type="PDBsum" id="1T7J"/>
<dbReference type="PDBsum" id="1WJA"/>
<dbReference type="PDBsum" id="1WJC"/>
<dbReference type="PDBsum" id="2JO0"/>
<dbReference type="PDBsum" id="2L6E"/>
<dbReference type="PDBsum" id="3OQ7"/>
<dbReference type="PDBsum" id="3OQA"/>
<dbReference type="PDBsum" id="3OQD"/>
<dbReference type="PDBsum" id="3OTS"/>
<dbReference type="PDBsum" id="3OTY"/>
<dbReference type="PDBsum" id="3OU1"/>
<dbReference type="PDBsum" id="3OU3"/>
<dbReference type="PDBsum" id="3OU4"/>
<dbReference type="PDBsum" id="3OUA"/>
<dbReference type="PDBsum" id="3OUB"/>
<dbReference type="PDBsum" id="3OUC"/>
<dbReference type="PDBsum" id="3OUD"/>
<dbReference type="PDBsum" id="3PJ6"/>
<dbReference type="PDBsum" id="3U7S"/>
<dbReference type="PDBsum" id="4A6B"/>
<dbReference type="PDBsum" id="4A6C"/>
<dbReference type="BMRB" id="P35963"/>
<dbReference type="SMR" id="P35963"/>
<dbReference type="DIP" id="DIP-45385N"/>
<dbReference type="IntAct" id="P35963">
    <property type="interactions" value="3"/>
</dbReference>
<dbReference type="DrugBank" id="DB01721">
    <property type="generic name" value="N-[2-hydroxy-1-indanyl]-5-[(2-tertiarybutylaminocarbonyl)-4(benzo[1,3]dioxol-5-ylmethyl)-piperazino]-4-hydroxy-2-(1-phenylethyl)-pentanamide"/>
</dbReference>
<dbReference type="EvolutionaryTrace" id="P35963"/>
<dbReference type="PRO" id="PR:P35963"/>
<dbReference type="Proteomes" id="UP000007419">
    <property type="component" value="Genome"/>
</dbReference>
<dbReference type="GO" id="GO:0043657">
    <property type="term" value="C:host cell"/>
    <property type="evidence" value="ECO:0007669"/>
    <property type="project" value="GOC"/>
</dbReference>
<dbReference type="GO" id="GO:0042025">
    <property type="term" value="C:host cell nucleus"/>
    <property type="evidence" value="ECO:0007669"/>
    <property type="project" value="UniProtKB-SubCell"/>
</dbReference>
<dbReference type="GO" id="GO:0020002">
    <property type="term" value="C:host cell plasma membrane"/>
    <property type="evidence" value="ECO:0007669"/>
    <property type="project" value="UniProtKB-SubCell"/>
</dbReference>
<dbReference type="GO" id="GO:0072494">
    <property type="term" value="C:host multivesicular body"/>
    <property type="evidence" value="ECO:0007669"/>
    <property type="project" value="UniProtKB-SubCell"/>
</dbReference>
<dbReference type="GO" id="GO:0016020">
    <property type="term" value="C:membrane"/>
    <property type="evidence" value="ECO:0007669"/>
    <property type="project" value="UniProtKB-KW"/>
</dbReference>
<dbReference type="GO" id="GO:0019013">
    <property type="term" value="C:viral nucleocapsid"/>
    <property type="evidence" value="ECO:0007669"/>
    <property type="project" value="UniProtKB-KW"/>
</dbReference>
<dbReference type="GO" id="GO:0055036">
    <property type="term" value="C:virion membrane"/>
    <property type="evidence" value="ECO:0007669"/>
    <property type="project" value="UniProtKB-SubCell"/>
</dbReference>
<dbReference type="GO" id="GO:0004190">
    <property type="term" value="F:aspartic-type endopeptidase activity"/>
    <property type="evidence" value="ECO:0007669"/>
    <property type="project" value="UniProtKB-KW"/>
</dbReference>
<dbReference type="GO" id="GO:0003677">
    <property type="term" value="F:DNA binding"/>
    <property type="evidence" value="ECO:0007669"/>
    <property type="project" value="UniProtKB-KW"/>
</dbReference>
<dbReference type="GO" id="GO:0003887">
    <property type="term" value="F:DNA-directed DNA polymerase activity"/>
    <property type="evidence" value="ECO:0007669"/>
    <property type="project" value="UniProtKB-KW"/>
</dbReference>
<dbReference type="GO" id="GO:0004533">
    <property type="term" value="F:exoribonuclease H activity"/>
    <property type="evidence" value="ECO:0007669"/>
    <property type="project" value="UniProtKB-EC"/>
</dbReference>
<dbReference type="GO" id="GO:0008289">
    <property type="term" value="F:lipid binding"/>
    <property type="evidence" value="ECO:0007669"/>
    <property type="project" value="UniProtKB-KW"/>
</dbReference>
<dbReference type="GO" id="GO:0035613">
    <property type="term" value="F:RNA stem-loop binding"/>
    <property type="evidence" value="ECO:0007669"/>
    <property type="project" value="TreeGrafter"/>
</dbReference>
<dbReference type="GO" id="GO:0003964">
    <property type="term" value="F:RNA-directed DNA polymerase activity"/>
    <property type="evidence" value="ECO:0007669"/>
    <property type="project" value="UniProtKB-KW"/>
</dbReference>
<dbReference type="GO" id="GO:0004523">
    <property type="term" value="F:RNA-DNA hybrid ribonuclease activity"/>
    <property type="evidence" value="ECO:0007669"/>
    <property type="project" value="InterPro"/>
</dbReference>
<dbReference type="GO" id="GO:0005198">
    <property type="term" value="F:structural molecule activity"/>
    <property type="evidence" value="ECO:0007669"/>
    <property type="project" value="InterPro"/>
</dbReference>
<dbReference type="GO" id="GO:0008270">
    <property type="term" value="F:zinc ion binding"/>
    <property type="evidence" value="ECO:0007669"/>
    <property type="project" value="UniProtKB-KW"/>
</dbReference>
<dbReference type="GO" id="GO:0015074">
    <property type="term" value="P:DNA integration"/>
    <property type="evidence" value="ECO:0007669"/>
    <property type="project" value="UniProtKB-KW"/>
</dbReference>
<dbReference type="GO" id="GO:0006310">
    <property type="term" value="P:DNA recombination"/>
    <property type="evidence" value="ECO:0007669"/>
    <property type="project" value="UniProtKB-KW"/>
</dbReference>
<dbReference type="GO" id="GO:0075713">
    <property type="term" value="P:establishment of integrated proviral latency"/>
    <property type="evidence" value="ECO:0007669"/>
    <property type="project" value="UniProtKB-KW"/>
</dbReference>
<dbReference type="GO" id="GO:0006508">
    <property type="term" value="P:proteolysis"/>
    <property type="evidence" value="ECO:0007669"/>
    <property type="project" value="UniProtKB-KW"/>
</dbReference>
<dbReference type="GO" id="GO:0046718">
    <property type="term" value="P:symbiont entry into host cell"/>
    <property type="evidence" value="ECO:0007669"/>
    <property type="project" value="UniProtKB-KW"/>
</dbReference>
<dbReference type="GO" id="GO:0052151">
    <property type="term" value="P:symbiont-mediated activation of host apoptosis"/>
    <property type="evidence" value="ECO:0007669"/>
    <property type="project" value="UniProtKB-KW"/>
</dbReference>
<dbReference type="GO" id="GO:0039657">
    <property type="term" value="P:symbiont-mediated suppression of host gene expression"/>
    <property type="evidence" value="ECO:0007669"/>
    <property type="project" value="UniProtKB-KW"/>
</dbReference>
<dbReference type="GO" id="GO:0044826">
    <property type="term" value="P:viral genome integration into host DNA"/>
    <property type="evidence" value="ECO:0007669"/>
    <property type="project" value="UniProtKB-KW"/>
</dbReference>
<dbReference type="GO" id="GO:0075732">
    <property type="term" value="P:viral penetration into host nucleus"/>
    <property type="evidence" value="ECO:0007669"/>
    <property type="project" value="UniProtKB-KW"/>
</dbReference>
<dbReference type="GO" id="GO:0075523">
    <property type="term" value="P:viral translational frameshifting"/>
    <property type="evidence" value="ECO:0007669"/>
    <property type="project" value="UniProtKB-KW"/>
</dbReference>
<dbReference type="CDD" id="cd05482">
    <property type="entry name" value="HIV_retropepsin_like"/>
    <property type="match status" value="1"/>
</dbReference>
<dbReference type="CDD" id="cd01645">
    <property type="entry name" value="RT_Rtv"/>
    <property type="match status" value="1"/>
</dbReference>
<dbReference type="FunFam" id="1.10.1200.30:FF:000001">
    <property type="entry name" value="Gag polyprotein"/>
    <property type="match status" value="1"/>
</dbReference>
<dbReference type="FunFam" id="1.10.150.90:FF:000001">
    <property type="entry name" value="Gag polyprotein"/>
    <property type="match status" value="1"/>
</dbReference>
<dbReference type="FunFam" id="1.10.375.10:FF:000001">
    <property type="entry name" value="Gag polyprotein"/>
    <property type="match status" value="1"/>
</dbReference>
<dbReference type="FunFam" id="1.20.5.760:FF:000001">
    <property type="entry name" value="Gag polyprotein"/>
    <property type="match status" value="1"/>
</dbReference>
<dbReference type="FunFam" id="4.10.60.10:FF:000001">
    <property type="entry name" value="Gag polyprotein"/>
    <property type="match status" value="1"/>
</dbReference>
<dbReference type="FunFam" id="2.40.70.10:FF:000001">
    <property type="entry name" value="Gag-Pol polyprotein"/>
    <property type="match status" value="1"/>
</dbReference>
<dbReference type="FunFam" id="3.30.420.10:FF:000025">
    <property type="entry name" value="Gag-Pol polyprotein"/>
    <property type="match status" value="1"/>
</dbReference>
<dbReference type="FunFam" id="2.30.30.10:FF:000001">
    <property type="entry name" value="POL polyprotein"/>
    <property type="match status" value="1"/>
</dbReference>
<dbReference type="FunFam" id="3.30.420.10:FF:000017">
    <property type="entry name" value="POL polyprotein"/>
    <property type="match status" value="1"/>
</dbReference>
<dbReference type="FunFam" id="3.30.70.270:FF:000016">
    <property type="entry name" value="POL polyprotein"/>
    <property type="match status" value="1"/>
</dbReference>
<dbReference type="Gene3D" id="1.10.10.200">
    <property type="match status" value="1"/>
</dbReference>
<dbReference type="Gene3D" id="1.10.1200.30">
    <property type="match status" value="1"/>
</dbReference>
<dbReference type="Gene3D" id="3.30.70.270">
    <property type="match status" value="3"/>
</dbReference>
<dbReference type="Gene3D" id="2.40.70.10">
    <property type="entry name" value="Acid Proteases"/>
    <property type="match status" value="1"/>
</dbReference>
<dbReference type="Gene3D" id="3.10.10.10">
    <property type="entry name" value="HIV Type 1 Reverse Transcriptase, subunit A, domain 1"/>
    <property type="match status" value="1"/>
</dbReference>
<dbReference type="Gene3D" id="1.10.375.10">
    <property type="entry name" value="Human Immunodeficiency Virus Type 1 Capsid Protein"/>
    <property type="match status" value="1"/>
</dbReference>
<dbReference type="Gene3D" id="1.10.150.90">
    <property type="entry name" value="Immunodeficiency lentiviruses, gag gene matrix protein p17"/>
    <property type="match status" value="1"/>
</dbReference>
<dbReference type="Gene3D" id="2.30.30.10">
    <property type="entry name" value="Integrase, C-terminal domain superfamily, retroviral"/>
    <property type="match status" value="1"/>
</dbReference>
<dbReference type="Gene3D" id="3.30.420.10">
    <property type="entry name" value="Ribonuclease H-like superfamily/Ribonuclease H"/>
    <property type="match status" value="2"/>
</dbReference>
<dbReference type="Gene3D" id="1.20.5.760">
    <property type="entry name" value="Single helix bin"/>
    <property type="match status" value="1"/>
</dbReference>
<dbReference type="Gene3D" id="4.10.60.10">
    <property type="entry name" value="Zinc finger, CCHC-type"/>
    <property type="match status" value="1"/>
</dbReference>
<dbReference type="InterPro" id="IPR001969">
    <property type="entry name" value="Aspartic_peptidase_AS"/>
</dbReference>
<dbReference type="InterPro" id="IPR043502">
    <property type="entry name" value="DNA/RNA_pol_sf"/>
</dbReference>
<dbReference type="InterPro" id="IPR045345">
    <property type="entry name" value="Gag_p24_C"/>
</dbReference>
<dbReference type="InterPro" id="IPR017856">
    <property type="entry name" value="Integrase-like_N"/>
</dbReference>
<dbReference type="InterPro" id="IPR036862">
    <property type="entry name" value="Integrase_C_dom_sf_retrovir"/>
</dbReference>
<dbReference type="InterPro" id="IPR001037">
    <property type="entry name" value="Integrase_C_retrovir"/>
</dbReference>
<dbReference type="InterPro" id="IPR001584">
    <property type="entry name" value="Integrase_cat-core"/>
</dbReference>
<dbReference type="InterPro" id="IPR003308">
    <property type="entry name" value="Integrase_Zn-bd_dom_N"/>
</dbReference>
<dbReference type="InterPro" id="IPR000071">
    <property type="entry name" value="Lentvrl_matrix_N"/>
</dbReference>
<dbReference type="InterPro" id="IPR012344">
    <property type="entry name" value="Matrix_HIV/RSV_N"/>
</dbReference>
<dbReference type="InterPro" id="IPR001995">
    <property type="entry name" value="Peptidase_A2_cat"/>
</dbReference>
<dbReference type="InterPro" id="IPR021109">
    <property type="entry name" value="Peptidase_aspartic_dom_sf"/>
</dbReference>
<dbReference type="InterPro" id="IPR034170">
    <property type="entry name" value="Retropepsin-like_cat_dom"/>
</dbReference>
<dbReference type="InterPro" id="IPR018061">
    <property type="entry name" value="Retropepsins"/>
</dbReference>
<dbReference type="InterPro" id="IPR008916">
    <property type="entry name" value="Retrov_capsid_C"/>
</dbReference>
<dbReference type="InterPro" id="IPR008919">
    <property type="entry name" value="Retrov_capsid_N"/>
</dbReference>
<dbReference type="InterPro" id="IPR010999">
    <property type="entry name" value="Retrovr_matrix"/>
</dbReference>
<dbReference type="InterPro" id="IPR043128">
    <property type="entry name" value="Rev_trsase/Diguanyl_cyclase"/>
</dbReference>
<dbReference type="InterPro" id="IPR012337">
    <property type="entry name" value="RNaseH-like_sf"/>
</dbReference>
<dbReference type="InterPro" id="IPR002156">
    <property type="entry name" value="RNaseH_domain"/>
</dbReference>
<dbReference type="InterPro" id="IPR036397">
    <property type="entry name" value="RNaseH_sf"/>
</dbReference>
<dbReference type="InterPro" id="IPR000477">
    <property type="entry name" value="RT_dom"/>
</dbReference>
<dbReference type="InterPro" id="IPR010659">
    <property type="entry name" value="RVT_connect"/>
</dbReference>
<dbReference type="InterPro" id="IPR010661">
    <property type="entry name" value="RVT_thumb"/>
</dbReference>
<dbReference type="InterPro" id="IPR001878">
    <property type="entry name" value="Znf_CCHC"/>
</dbReference>
<dbReference type="InterPro" id="IPR036875">
    <property type="entry name" value="Znf_CCHC_sf"/>
</dbReference>
<dbReference type="PANTHER" id="PTHR41694">
    <property type="entry name" value="ENDOGENOUS RETROVIRUS GROUP K MEMBER POL PROTEIN"/>
    <property type="match status" value="1"/>
</dbReference>
<dbReference type="PANTHER" id="PTHR41694:SF3">
    <property type="entry name" value="RNA-DIRECTED DNA POLYMERASE-RELATED"/>
    <property type="match status" value="1"/>
</dbReference>
<dbReference type="Pfam" id="PF00540">
    <property type="entry name" value="Gag_p17"/>
    <property type="match status" value="1"/>
</dbReference>
<dbReference type="Pfam" id="PF19317">
    <property type="entry name" value="Gag_p24_C"/>
    <property type="match status" value="1"/>
</dbReference>
<dbReference type="Pfam" id="PF00552">
    <property type="entry name" value="IN_DBD_C"/>
    <property type="match status" value="1"/>
</dbReference>
<dbReference type="Pfam" id="PF02022">
    <property type="entry name" value="Integrase_Zn"/>
    <property type="match status" value="1"/>
</dbReference>
<dbReference type="Pfam" id="PF00075">
    <property type="entry name" value="RNase_H"/>
    <property type="match status" value="1"/>
</dbReference>
<dbReference type="Pfam" id="PF00665">
    <property type="entry name" value="rve"/>
    <property type="match status" value="1"/>
</dbReference>
<dbReference type="Pfam" id="PF00077">
    <property type="entry name" value="RVP"/>
    <property type="match status" value="1"/>
</dbReference>
<dbReference type="Pfam" id="PF00078">
    <property type="entry name" value="RVT_1"/>
    <property type="match status" value="1"/>
</dbReference>
<dbReference type="Pfam" id="PF06815">
    <property type="entry name" value="RVT_connect"/>
    <property type="match status" value="1"/>
</dbReference>
<dbReference type="Pfam" id="PF06817">
    <property type="entry name" value="RVT_thumb"/>
    <property type="match status" value="1"/>
</dbReference>
<dbReference type="Pfam" id="PF00098">
    <property type="entry name" value="zf-CCHC"/>
    <property type="match status" value="2"/>
</dbReference>
<dbReference type="PRINTS" id="PR00234">
    <property type="entry name" value="HIV1MATRIX"/>
</dbReference>
<dbReference type="SMART" id="SM00343">
    <property type="entry name" value="ZnF_C2HC"/>
    <property type="match status" value="2"/>
</dbReference>
<dbReference type="SUPFAM" id="SSF50630">
    <property type="entry name" value="Acid proteases"/>
    <property type="match status" value="1"/>
</dbReference>
<dbReference type="SUPFAM" id="SSF50122">
    <property type="entry name" value="DNA-binding domain of retroviral integrase"/>
    <property type="match status" value="1"/>
</dbReference>
<dbReference type="SUPFAM" id="SSF56672">
    <property type="entry name" value="DNA/RNA polymerases"/>
    <property type="match status" value="1"/>
</dbReference>
<dbReference type="SUPFAM" id="SSF46919">
    <property type="entry name" value="N-terminal Zn binding domain of HIV integrase"/>
    <property type="match status" value="1"/>
</dbReference>
<dbReference type="SUPFAM" id="SSF47836">
    <property type="entry name" value="Retroviral matrix proteins"/>
    <property type="match status" value="1"/>
</dbReference>
<dbReference type="SUPFAM" id="SSF47353">
    <property type="entry name" value="Retrovirus capsid dimerization domain-like"/>
    <property type="match status" value="1"/>
</dbReference>
<dbReference type="SUPFAM" id="SSF47943">
    <property type="entry name" value="Retrovirus capsid protein, N-terminal core domain"/>
    <property type="match status" value="1"/>
</dbReference>
<dbReference type="SUPFAM" id="SSF57756">
    <property type="entry name" value="Retrovirus zinc finger-like domains"/>
    <property type="match status" value="1"/>
</dbReference>
<dbReference type="SUPFAM" id="SSF53098">
    <property type="entry name" value="Ribonuclease H-like"/>
    <property type="match status" value="2"/>
</dbReference>
<dbReference type="PROSITE" id="PS50175">
    <property type="entry name" value="ASP_PROT_RETROV"/>
    <property type="match status" value="1"/>
</dbReference>
<dbReference type="PROSITE" id="PS00141">
    <property type="entry name" value="ASP_PROTEASE"/>
    <property type="match status" value="1"/>
</dbReference>
<dbReference type="PROSITE" id="PS50994">
    <property type="entry name" value="INTEGRASE"/>
    <property type="match status" value="1"/>
</dbReference>
<dbReference type="PROSITE" id="PS51027">
    <property type="entry name" value="INTEGRASE_DBD"/>
    <property type="match status" value="1"/>
</dbReference>
<dbReference type="PROSITE" id="PS50879">
    <property type="entry name" value="RNASE_H_1"/>
    <property type="match status" value="1"/>
</dbReference>
<dbReference type="PROSITE" id="PS50878">
    <property type="entry name" value="RT_POL"/>
    <property type="match status" value="1"/>
</dbReference>
<dbReference type="PROSITE" id="PS50158">
    <property type="entry name" value="ZF_CCHC"/>
    <property type="match status" value="2"/>
</dbReference>
<dbReference type="PROSITE" id="PS50876">
    <property type="entry name" value="ZF_INTEGRASE"/>
    <property type="match status" value="1"/>
</dbReference>
<protein>
    <recommendedName>
        <fullName>Gag-Pol polyprotein</fullName>
    </recommendedName>
    <alternativeName>
        <fullName>Pr160Gag-Pol</fullName>
    </alternativeName>
    <component>
        <recommendedName>
            <fullName>Matrix protein p17</fullName>
            <shortName>MA</shortName>
        </recommendedName>
    </component>
    <component>
        <recommendedName>
            <fullName>Capsid protein p24</fullName>
            <shortName>CA</shortName>
        </recommendedName>
    </component>
    <component>
        <recommendedName>
            <fullName evidence="7">Spacer peptide 1</fullName>
            <shortName>SP1</shortName>
        </recommendedName>
        <alternativeName>
            <fullName>p2</fullName>
        </alternativeName>
    </component>
    <component>
        <recommendedName>
            <fullName>Nucleocapsid protein p7</fullName>
            <shortName>NC</shortName>
        </recommendedName>
    </component>
    <component>
        <recommendedName>
            <fullName>Transframe peptide</fullName>
            <shortName>TF</shortName>
        </recommendedName>
    </component>
    <component>
        <recommendedName>
            <fullName>p6-pol</fullName>
            <shortName>p6*</shortName>
        </recommendedName>
    </component>
    <component>
        <recommendedName>
            <fullName>Protease</fullName>
            <ecNumber>3.4.23.16</ecNumber>
        </recommendedName>
        <alternativeName>
            <fullName>PR</fullName>
        </alternativeName>
        <alternativeName>
            <fullName>Retropepsin</fullName>
        </alternativeName>
    </component>
    <component>
        <recommendedName>
            <fullName>Reverse transcriptase/ribonuclease H</fullName>
            <ecNumber>2.7.7.49</ecNumber>
            <ecNumber>2.7.7.7</ecNumber>
            <ecNumber>3.1.26.13</ecNumber>
        </recommendedName>
        <alternativeName>
            <fullName>Exoribonuclease H</fullName>
            <ecNumber>3.1.13.2</ecNumber>
        </alternativeName>
        <alternativeName>
            <fullName>p66 RT</fullName>
        </alternativeName>
    </component>
    <component>
        <recommendedName>
            <fullName>p51 RT</fullName>
        </recommendedName>
    </component>
    <component>
        <recommendedName>
            <fullName>p15</fullName>
        </recommendedName>
    </component>
    <component>
        <recommendedName>
            <fullName>Integrase</fullName>
            <shortName>IN</shortName>
            <ecNumber evidence="5">2.7.7.-</ecNumber>
            <ecNumber evidence="5">3.1.-.-</ecNumber>
        </recommendedName>
    </component>
</protein>
<gene>
    <name type="primary">gag-pol</name>
</gene>